<name>YTXC_BACSU</name>
<protein>
    <recommendedName>
        <fullName>Uncharacterized protein YtxC</fullName>
    </recommendedName>
    <alternativeName>
        <fullName>ORF-281</fullName>
    </alternativeName>
</protein>
<gene>
    <name type="primary">ytxC</name>
    <name type="ordered locus">BSU28960</name>
</gene>
<keyword id="KW-1185">Reference proteome</keyword>
<proteinExistence type="predicted"/>
<dbReference type="EMBL" id="X04963">
    <property type="protein sequence ID" value="CAA28635.1"/>
    <property type="molecule type" value="Genomic_DNA"/>
</dbReference>
<dbReference type="EMBL" id="Z75208">
    <property type="protein sequence ID" value="CAA99607.1"/>
    <property type="molecule type" value="Genomic_DNA"/>
</dbReference>
<dbReference type="EMBL" id="AF008220">
    <property type="protein sequence ID" value="AAC00361.1"/>
    <property type="molecule type" value="Genomic_DNA"/>
</dbReference>
<dbReference type="EMBL" id="AL009126">
    <property type="protein sequence ID" value="CAB14856.2"/>
    <property type="molecule type" value="Genomic_DNA"/>
</dbReference>
<dbReference type="PIR" id="D24720">
    <property type="entry name" value="D24720"/>
</dbReference>
<dbReference type="RefSeq" id="NP_390774.2">
    <property type="nucleotide sequence ID" value="NC_000964.3"/>
</dbReference>
<dbReference type="RefSeq" id="WP_003229471.1">
    <property type="nucleotide sequence ID" value="NZ_OZ025638.1"/>
</dbReference>
<dbReference type="FunCoup" id="P06569">
    <property type="interactions" value="60"/>
</dbReference>
<dbReference type="STRING" id="224308.BSU28960"/>
<dbReference type="PaxDb" id="224308-BSU28960"/>
<dbReference type="EnsemblBacteria" id="CAB14856">
    <property type="protein sequence ID" value="CAB14856"/>
    <property type="gene ID" value="BSU_28960"/>
</dbReference>
<dbReference type="GeneID" id="937401"/>
<dbReference type="KEGG" id="bsu:BSU28960"/>
<dbReference type="PATRIC" id="fig|224308.179.peg.3145"/>
<dbReference type="eggNOG" id="ENOG502ZATN">
    <property type="taxonomic scope" value="Bacteria"/>
</dbReference>
<dbReference type="InParanoid" id="P06569"/>
<dbReference type="OrthoDB" id="2986513at2"/>
<dbReference type="BioCyc" id="BSUB:BSU28960-MONOMER"/>
<dbReference type="Proteomes" id="UP000001570">
    <property type="component" value="Chromosome"/>
</dbReference>
<dbReference type="InterPro" id="IPR014199">
    <property type="entry name" value="Spore_YtxC"/>
</dbReference>
<dbReference type="NCBIfam" id="TIGR02834">
    <property type="entry name" value="spo_ytxC"/>
    <property type="match status" value="1"/>
</dbReference>
<dbReference type="Pfam" id="PF08812">
    <property type="entry name" value="YtxC"/>
    <property type="match status" value="1"/>
</dbReference>
<dbReference type="PIRSF" id="PIRSF012563">
    <property type="entry name" value="YtxC"/>
    <property type="match status" value="1"/>
</dbReference>
<evidence type="ECO:0000305" key="1"/>
<feature type="chain" id="PRO_0000049903" description="Uncharacterized protein YtxC">
    <location>
        <begin position="1"/>
        <end position="281"/>
    </location>
</feature>
<feature type="sequence conflict" description="In Ref. 1; CAA28635, 2; CAA99607 and 3; AAC00361." evidence="1" ref="1 2 3">
    <original>ML</original>
    <variation>IV</variation>
    <location>
        <begin position="263"/>
        <end position="264"/>
    </location>
</feature>
<organism>
    <name type="scientific">Bacillus subtilis (strain 168)</name>
    <dbReference type="NCBI Taxonomy" id="224308"/>
    <lineage>
        <taxon>Bacteria</taxon>
        <taxon>Bacillati</taxon>
        <taxon>Bacillota</taxon>
        <taxon>Bacilli</taxon>
        <taxon>Bacillales</taxon>
        <taxon>Bacillaceae</taxon>
        <taxon>Bacillus</taxon>
    </lineage>
</organism>
<sequence>MLEIIFEDDHDAAAFLHLIQHSDDRNNIIVREGIRKIGIEKANPAFPIQRFMEPILVKFFLECKEDEHMLSLIEETYCFTDQDEQQQILQLAHSIIEGEADDLPFEPLKLSRKQSILDELQTICLEEGVFYIRSFQTFRLGSYYKQLRDITEAAIDEYKMEQEYQNFIQTLRDYVDAKQPRIKKVHIVHDGSFTLWELRYVPEREKMKYIDRRFVRDHPMYIDSHLLAPLISIAPDEVVLYTDQPEHMMARTIQNVFQERVEMLPLHAFTDAEIPVKHSEG</sequence>
<accession>P06569</accession>
<reference key="1">
    <citation type="journal article" date="1986" name="Nucleic Acids Res.">
        <title>Nucleotide sequence and organization of dnaB gene and neighbouring genes on the Bacillus subtilis chromosome.</title>
        <authorList>
            <person name="Ogasawara N."/>
            <person name="Moriya S."/>
            <person name="Mazza P.G."/>
            <person name="Yoshikawa H."/>
        </authorList>
    </citation>
    <scope>NUCLEOTIDE SEQUENCE [GENOMIC DNA]</scope>
</reference>
<reference key="2">
    <citation type="journal article" date="1996" name="Microbiology">
        <title>The dnaB-pheA (256 degrees-240 degrees) region of the Bacillus subtilis chromosome containing genes responsible for stress responses, the utilization of plant cell walls and primary metabolism.</title>
        <authorList>
            <person name="Wipat A."/>
            <person name="Carter N."/>
            <person name="Brignell C.S."/>
            <person name="Guy J.B."/>
            <person name="Piper K."/>
            <person name="Sanders J."/>
            <person name="Emmerson P.T."/>
            <person name="Harwood C.R."/>
        </authorList>
    </citation>
    <scope>NUCLEOTIDE SEQUENCE [GENOMIC DNA]</scope>
    <source>
        <strain>168</strain>
    </source>
</reference>
<reference key="3">
    <citation type="journal article" date="1997" name="Microbiology">
        <title>Sequencing and functional annotation of the Bacillus subtilis genes in the 200 kb rrnB-dnaB region.</title>
        <authorList>
            <person name="Lapidus A."/>
            <person name="Galleron N."/>
            <person name="Sorokin A."/>
            <person name="Ehrlich S.D."/>
        </authorList>
    </citation>
    <scope>NUCLEOTIDE SEQUENCE [GENOMIC DNA]</scope>
    <source>
        <strain>168</strain>
    </source>
</reference>
<reference key="4">
    <citation type="journal article" date="1997" name="Nature">
        <title>The complete genome sequence of the Gram-positive bacterium Bacillus subtilis.</title>
        <authorList>
            <person name="Kunst F."/>
            <person name="Ogasawara N."/>
            <person name="Moszer I."/>
            <person name="Albertini A.M."/>
            <person name="Alloni G."/>
            <person name="Azevedo V."/>
            <person name="Bertero M.G."/>
            <person name="Bessieres P."/>
            <person name="Bolotin A."/>
            <person name="Borchert S."/>
            <person name="Borriss R."/>
            <person name="Boursier L."/>
            <person name="Brans A."/>
            <person name="Braun M."/>
            <person name="Brignell S.C."/>
            <person name="Bron S."/>
            <person name="Brouillet S."/>
            <person name="Bruschi C.V."/>
            <person name="Caldwell B."/>
            <person name="Capuano V."/>
            <person name="Carter N.M."/>
            <person name="Choi S.-K."/>
            <person name="Codani J.-J."/>
            <person name="Connerton I.F."/>
            <person name="Cummings N.J."/>
            <person name="Daniel R.A."/>
            <person name="Denizot F."/>
            <person name="Devine K.M."/>
            <person name="Duesterhoeft A."/>
            <person name="Ehrlich S.D."/>
            <person name="Emmerson P.T."/>
            <person name="Entian K.-D."/>
            <person name="Errington J."/>
            <person name="Fabret C."/>
            <person name="Ferrari E."/>
            <person name="Foulger D."/>
            <person name="Fritz C."/>
            <person name="Fujita M."/>
            <person name="Fujita Y."/>
            <person name="Fuma S."/>
            <person name="Galizzi A."/>
            <person name="Galleron N."/>
            <person name="Ghim S.-Y."/>
            <person name="Glaser P."/>
            <person name="Goffeau A."/>
            <person name="Golightly E.J."/>
            <person name="Grandi G."/>
            <person name="Guiseppi G."/>
            <person name="Guy B.J."/>
            <person name="Haga K."/>
            <person name="Haiech J."/>
            <person name="Harwood C.R."/>
            <person name="Henaut A."/>
            <person name="Hilbert H."/>
            <person name="Holsappel S."/>
            <person name="Hosono S."/>
            <person name="Hullo M.-F."/>
            <person name="Itaya M."/>
            <person name="Jones L.-M."/>
            <person name="Joris B."/>
            <person name="Karamata D."/>
            <person name="Kasahara Y."/>
            <person name="Klaerr-Blanchard M."/>
            <person name="Klein C."/>
            <person name="Kobayashi Y."/>
            <person name="Koetter P."/>
            <person name="Koningstein G."/>
            <person name="Krogh S."/>
            <person name="Kumano M."/>
            <person name="Kurita K."/>
            <person name="Lapidus A."/>
            <person name="Lardinois S."/>
            <person name="Lauber J."/>
            <person name="Lazarevic V."/>
            <person name="Lee S.-M."/>
            <person name="Levine A."/>
            <person name="Liu H."/>
            <person name="Masuda S."/>
            <person name="Mauel C."/>
            <person name="Medigue C."/>
            <person name="Medina N."/>
            <person name="Mellado R.P."/>
            <person name="Mizuno M."/>
            <person name="Moestl D."/>
            <person name="Nakai S."/>
            <person name="Noback M."/>
            <person name="Noone D."/>
            <person name="O'Reilly M."/>
            <person name="Ogawa K."/>
            <person name="Ogiwara A."/>
            <person name="Oudega B."/>
            <person name="Park S.-H."/>
            <person name="Parro V."/>
            <person name="Pohl T.M."/>
            <person name="Portetelle D."/>
            <person name="Porwollik S."/>
            <person name="Prescott A.M."/>
            <person name="Presecan E."/>
            <person name="Pujic P."/>
            <person name="Purnelle B."/>
            <person name="Rapoport G."/>
            <person name="Rey M."/>
            <person name="Reynolds S."/>
            <person name="Rieger M."/>
            <person name="Rivolta C."/>
            <person name="Rocha E."/>
            <person name="Roche B."/>
            <person name="Rose M."/>
            <person name="Sadaie Y."/>
            <person name="Sato T."/>
            <person name="Scanlan E."/>
            <person name="Schleich S."/>
            <person name="Schroeter R."/>
            <person name="Scoffone F."/>
            <person name="Sekiguchi J."/>
            <person name="Sekowska A."/>
            <person name="Seror S.J."/>
            <person name="Serror P."/>
            <person name="Shin B.-S."/>
            <person name="Soldo B."/>
            <person name="Sorokin A."/>
            <person name="Tacconi E."/>
            <person name="Takagi T."/>
            <person name="Takahashi H."/>
            <person name="Takemaru K."/>
            <person name="Takeuchi M."/>
            <person name="Tamakoshi A."/>
            <person name="Tanaka T."/>
            <person name="Terpstra P."/>
            <person name="Tognoni A."/>
            <person name="Tosato V."/>
            <person name="Uchiyama S."/>
            <person name="Vandenbol M."/>
            <person name="Vannier F."/>
            <person name="Vassarotti A."/>
            <person name="Viari A."/>
            <person name="Wambutt R."/>
            <person name="Wedler E."/>
            <person name="Wedler H."/>
            <person name="Weitzenegger T."/>
            <person name="Winters P."/>
            <person name="Wipat A."/>
            <person name="Yamamoto H."/>
            <person name="Yamane K."/>
            <person name="Yasumoto K."/>
            <person name="Yata K."/>
            <person name="Yoshida K."/>
            <person name="Yoshikawa H.-F."/>
            <person name="Zumstein E."/>
            <person name="Yoshikawa H."/>
            <person name="Danchin A."/>
        </authorList>
    </citation>
    <scope>NUCLEOTIDE SEQUENCE [LARGE SCALE GENOMIC DNA]</scope>
    <source>
        <strain>168</strain>
    </source>
</reference>
<reference key="5">
    <citation type="journal article" date="2009" name="Microbiology">
        <title>From a consortium sequence to a unified sequence: the Bacillus subtilis 168 reference genome a decade later.</title>
        <authorList>
            <person name="Barbe V."/>
            <person name="Cruveiller S."/>
            <person name="Kunst F."/>
            <person name="Lenoble P."/>
            <person name="Meurice G."/>
            <person name="Sekowska A."/>
            <person name="Vallenet D."/>
            <person name="Wang T."/>
            <person name="Moszer I."/>
            <person name="Medigue C."/>
            <person name="Danchin A."/>
        </authorList>
    </citation>
    <scope>SEQUENCE REVISION TO 263-264</scope>
</reference>